<keyword id="KW-0030">Aminoacyl-tRNA synthetase</keyword>
<keyword id="KW-0067">ATP-binding</keyword>
<keyword id="KW-0963">Cytoplasm</keyword>
<keyword id="KW-0436">Ligase</keyword>
<keyword id="KW-0547">Nucleotide-binding</keyword>
<keyword id="KW-0648">Protein biosynthesis</keyword>
<evidence type="ECO:0000255" key="1">
    <source>
        <dbReference type="HAMAP-Rule" id="MF_00534"/>
    </source>
</evidence>
<dbReference type="EC" id="6.1.1.22" evidence="1"/>
<dbReference type="EMBL" id="AE016823">
    <property type="protein sequence ID" value="AAS70600.1"/>
    <property type="molecule type" value="Genomic_DNA"/>
</dbReference>
<dbReference type="RefSeq" id="WP_000005292.1">
    <property type="nucleotide sequence ID" value="NC_005823.1"/>
</dbReference>
<dbReference type="SMR" id="Q72QT4"/>
<dbReference type="GeneID" id="61141916"/>
<dbReference type="KEGG" id="lic:LIC_12025"/>
<dbReference type="HOGENOM" id="CLU_004553_2_0_12"/>
<dbReference type="Proteomes" id="UP000007037">
    <property type="component" value="Chromosome I"/>
</dbReference>
<dbReference type="GO" id="GO:0005737">
    <property type="term" value="C:cytoplasm"/>
    <property type="evidence" value="ECO:0007669"/>
    <property type="project" value="UniProtKB-SubCell"/>
</dbReference>
<dbReference type="GO" id="GO:0004816">
    <property type="term" value="F:asparagine-tRNA ligase activity"/>
    <property type="evidence" value="ECO:0007669"/>
    <property type="project" value="UniProtKB-UniRule"/>
</dbReference>
<dbReference type="GO" id="GO:0005524">
    <property type="term" value="F:ATP binding"/>
    <property type="evidence" value="ECO:0007669"/>
    <property type="project" value="UniProtKB-UniRule"/>
</dbReference>
<dbReference type="GO" id="GO:0003676">
    <property type="term" value="F:nucleic acid binding"/>
    <property type="evidence" value="ECO:0007669"/>
    <property type="project" value="InterPro"/>
</dbReference>
<dbReference type="GO" id="GO:0006421">
    <property type="term" value="P:asparaginyl-tRNA aminoacylation"/>
    <property type="evidence" value="ECO:0007669"/>
    <property type="project" value="UniProtKB-UniRule"/>
</dbReference>
<dbReference type="CDD" id="cd04323">
    <property type="entry name" value="AsnRS_cyto_like_N"/>
    <property type="match status" value="1"/>
</dbReference>
<dbReference type="CDD" id="cd00776">
    <property type="entry name" value="AsxRS_core"/>
    <property type="match status" value="1"/>
</dbReference>
<dbReference type="Gene3D" id="3.30.930.10">
    <property type="entry name" value="Bira Bifunctional Protein, Domain 2"/>
    <property type="match status" value="1"/>
</dbReference>
<dbReference type="Gene3D" id="2.40.50.140">
    <property type="entry name" value="Nucleic acid-binding proteins"/>
    <property type="match status" value="1"/>
</dbReference>
<dbReference type="HAMAP" id="MF_00534">
    <property type="entry name" value="Asn_tRNA_synth"/>
    <property type="match status" value="1"/>
</dbReference>
<dbReference type="InterPro" id="IPR004364">
    <property type="entry name" value="Aa-tRNA-synt_II"/>
</dbReference>
<dbReference type="InterPro" id="IPR006195">
    <property type="entry name" value="aa-tRNA-synth_II"/>
</dbReference>
<dbReference type="InterPro" id="IPR045864">
    <property type="entry name" value="aa-tRNA-synth_II/BPL/LPL"/>
</dbReference>
<dbReference type="InterPro" id="IPR004522">
    <property type="entry name" value="Asn-tRNA-ligase"/>
</dbReference>
<dbReference type="InterPro" id="IPR002312">
    <property type="entry name" value="Asp/Asn-tRNA-synth_IIb"/>
</dbReference>
<dbReference type="InterPro" id="IPR012340">
    <property type="entry name" value="NA-bd_OB-fold"/>
</dbReference>
<dbReference type="InterPro" id="IPR004365">
    <property type="entry name" value="NA-bd_OB_tRNA"/>
</dbReference>
<dbReference type="NCBIfam" id="TIGR00457">
    <property type="entry name" value="asnS"/>
    <property type="match status" value="1"/>
</dbReference>
<dbReference type="NCBIfam" id="NF003037">
    <property type="entry name" value="PRK03932.1"/>
    <property type="match status" value="1"/>
</dbReference>
<dbReference type="PANTHER" id="PTHR22594:SF34">
    <property type="entry name" value="ASPARAGINE--TRNA LIGASE, MITOCHONDRIAL-RELATED"/>
    <property type="match status" value="1"/>
</dbReference>
<dbReference type="PANTHER" id="PTHR22594">
    <property type="entry name" value="ASPARTYL/LYSYL-TRNA SYNTHETASE"/>
    <property type="match status" value="1"/>
</dbReference>
<dbReference type="Pfam" id="PF00152">
    <property type="entry name" value="tRNA-synt_2"/>
    <property type="match status" value="1"/>
</dbReference>
<dbReference type="Pfam" id="PF01336">
    <property type="entry name" value="tRNA_anti-codon"/>
    <property type="match status" value="1"/>
</dbReference>
<dbReference type="PRINTS" id="PR01042">
    <property type="entry name" value="TRNASYNTHASP"/>
</dbReference>
<dbReference type="SUPFAM" id="SSF55681">
    <property type="entry name" value="Class II aaRS and biotin synthetases"/>
    <property type="match status" value="1"/>
</dbReference>
<dbReference type="SUPFAM" id="SSF50249">
    <property type="entry name" value="Nucleic acid-binding proteins"/>
    <property type="match status" value="1"/>
</dbReference>
<dbReference type="PROSITE" id="PS50862">
    <property type="entry name" value="AA_TRNA_LIGASE_II"/>
    <property type="match status" value="1"/>
</dbReference>
<accession>Q72QT4</accession>
<proteinExistence type="inferred from homology"/>
<feature type="chain" id="PRO_0000176420" description="Asparagine--tRNA ligase">
    <location>
        <begin position="1"/>
        <end position="435"/>
    </location>
</feature>
<protein>
    <recommendedName>
        <fullName evidence="1">Asparagine--tRNA ligase</fullName>
        <ecNumber evidence="1">6.1.1.22</ecNumber>
    </recommendedName>
    <alternativeName>
        <fullName evidence="1">Asparaginyl-tRNA synthetase</fullName>
        <shortName evidence="1">AsnRS</shortName>
    </alternativeName>
</protein>
<organism>
    <name type="scientific">Leptospira interrogans serogroup Icterohaemorrhagiae serovar copenhageni (strain Fiocruz L1-130)</name>
    <dbReference type="NCBI Taxonomy" id="267671"/>
    <lineage>
        <taxon>Bacteria</taxon>
        <taxon>Pseudomonadati</taxon>
        <taxon>Spirochaetota</taxon>
        <taxon>Spirochaetia</taxon>
        <taxon>Leptospirales</taxon>
        <taxon>Leptospiraceae</taxon>
        <taxon>Leptospira</taxon>
    </lineage>
</organism>
<reference key="1">
    <citation type="journal article" date="2004" name="J. Bacteriol.">
        <title>Comparative genomics of two Leptospira interrogans serovars reveals novel insights into physiology and pathogenesis.</title>
        <authorList>
            <person name="Nascimento A.L.T.O."/>
            <person name="Ko A.I."/>
            <person name="Martins E.A.L."/>
            <person name="Monteiro-Vitorello C.B."/>
            <person name="Ho P.L."/>
            <person name="Haake D.A."/>
            <person name="Verjovski-Almeida S."/>
            <person name="Hartskeerl R.A."/>
            <person name="Marques M.V."/>
            <person name="Oliveira M.C."/>
            <person name="Menck C.F.M."/>
            <person name="Leite L.C.C."/>
            <person name="Carrer H."/>
            <person name="Coutinho L.L."/>
            <person name="Degrave W.M."/>
            <person name="Dellagostin O.A."/>
            <person name="El-Dorry H."/>
            <person name="Ferro E.S."/>
            <person name="Ferro M.I.T."/>
            <person name="Furlan L.R."/>
            <person name="Gamberini M."/>
            <person name="Giglioti E.A."/>
            <person name="Goes-Neto A."/>
            <person name="Goldman G.H."/>
            <person name="Goldman M.H.S."/>
            <person name="Harakava R."/>
            <person name="Jeronimo S.M.B."/>
            <person name="Junqueira-de-Azevedo I.L.M."/>
            <person name="Kimura E.T."/>
            <person name="Kuramae E.E."/>
            <person name="Lemos E.G.M."/>
            <person name="Lemos M.V.F."/>
            <person name="Marino C.L."/>
            <person name="Nunes L.R."/>
            <person name="de Oliveira R.C."/>
            <person name="Pereira G.G."/>
            <person name="Reis M.S."/>
            <person name="Schriefer A."/>
            <person name="Siqueira W.J."/>
            <person name="Sommer P."/>
            <person name="Tsai S.M."/>
            <person name="Simpson A.J.G."/>
            <person name="Ferro J.A."/>
            <person name="Camargo L.E.A."/>
            <person name="Kitajima J.P."/>
            <person name="Setubal J.C."/>
            <person name="Van Sluys M.A."/>
        </authorList>
    </citation>
    <scope>NUCLEOTIDE SEQUENCE [LARGE SCALE GENOMIC DNA]</scope>
    <source>
        <strain>Fiocruz L1-130</strain>
    </source>
</reference>
<gene>
    <name evidence="1" type="primary">asnS</name>
    <name type="ordered locus">LIC_12025</name>
</gene>
<sequence>MSETPIVSNHDLGKYVDQKVVIQGWVHGIRGSNARQFLSLRNSGKILQVLAEKEILGEEVFQTVKHLRQETSVTVIGNLVKNEKSPIGFELVMESIQIVGESENYPITPKEHGIDFLISQRHLWLRSSKQLAILRVRDNLSFAIRKYFHERDFLLIDTPILTGSVGESAGTLFSTEYFDLGNAYLAQTGQLYLETAIFAHNKVFCYGPTFRAEKSKTRRHLTEFWMVEAEVAFATHAENLKLQEDFVKTVIKETVQNSFQDLKVLERDPAPLLAYLEKDFPVIDYTKALEILQSKGEDIVWGDDINSEREQILTVEFGGPVFIQKYPREAKAFYMKVNPEDPRTVLNADLIAPDGVGEIIGGSEREENYENIVQRLKEEKLPVESYDWYLDLRKYGSVPHSGFGLGSERLIAWICGLAHVRECIPFPRMMERLYP</sequence>
<name>SYN_LEPIC</name>
<comment type="catalytic activity">
    <reaction evidence="1">
        <text>tRNA(Asn) + L-asparagine + ATP = L-asparaginyl-tRNA(Asn) + AMP + diphosphate + H(+)</text>
        <dbReference type="Rhea" id="RHEA:11180"/>
        <dbReference type="Rhea" id="RHEA-COMP:9659"/>
        <dbReference type="Rhea" id="RHEA-COMP:9674"/>
        <dbReference type="ChEBI" id="CHEBI:15378"/>
        <dbReference type="ChEBI" id="CHEBI:30616"/>
        <dbReference type="ChEBI" id="CHEBI:33019"/>
        <dbReference type="ChEBI" id="CHEBI:58048"/>
        <dbReference type="ChEBI" id="CHEBI:78442"/>
        <dbReference type="ChEBI" id="CHEBI:78515"/>
        <dbReference type="ChEBI" id="CHEBI:456215"/>
        <dbReference type="EC" id="6.1.1.22"/>
    </reaction>
</comment>
<comment type="subunit">
    <text evidence="1">Homodimer.</text>
</comment>
<comment type="subcellular location">
    <subcellularLocation>
        <location evidence="1">Cytoplasm</location>
    </subcellularLocation>
</comment>
<comment type="similarity">
    <text evidence="1">Belongs to the class-II aminoacyl-tRNA synthetase family.</text>
</comment>